<proteinExistence type="inferred from homology"/>
<keyword id="KW-1005">Bacterial flagellum biogenesis</keyword>
<keyword id="KW-0143">Chaperone</keyword>
<keyword id="KW-0963">Cytoplasm</keyword>
<keyword id="KW-1185">Reference proteome</keyword>
<keyword id="KW-0810">Translation regulation</keyword>
<protein>
    <recommendedName>
        <fullName evidence="1">Flagellar assembly factor FliW 2</fullName>
    </recommendedName>
</protein>
<organism>
    <name type="scientific">Desulfotalea psychrophila (strain LSv54 / DSM 12343)</name>
    <dbReference type="NCBI Taxonomy" id="177439"/>
    <lineage>
        <taxon>Bacteria</taxon>
        <taxon>Pseudomonadati</taxon>
        <taxon>Thermodesulfobacteriota</taxon>
        <taxon>Desulfobulbia</taxon>
        <taxon>Desulfobulbales</taxon>
        <taxon>Desulfocapsaceae</taxon>
        <taxon>Desulfotalea</taxon>
    </lineage>
</organism>
<feature type="chain" id="PRO_0000272986" description="Flagellar assembly factor FliW 2">
    <location>
        <begin position="1"/>
        <end position="151"/>
    </location>
</feature>
<evidence type="ECO:0000255" key="1">
    <source>
        <dbReference type="HAMAP-Rule" id="MF_01185"/>
    </source>
</evidence>
<reference key="1">
    <citation type="journal article" date="2004" name="Environ. Microbiol.">
        <title>The genome of Desulfotalea psychrophila, a sulfate-reducing bacterium from permanently cold Arctic sediments.</title>
        <authorList>
            <person name="Rabus R."/>
            <person name="Ruepp A."/>
            <person name="Frickey T."/>
            <person name="Rattei T."/>
            <person name="Fartmann B."/>
            <person name="Stark M."/>
            <person name="Bauer M."/>
            <person name="Zibat A."/>
            <person name="Lombardot T."/>
            <person name="Becker I."/>
            <person name="Amann J."/>
            <person name="Gellner K."/>
            <person name="Teeling H."/>
            <person name="Leuschner W.D."/>
            <person name="Gloeckner F.-O."/>
            <person name="Lupas A.N."/>
            <person name="Amann R."/>
            <person name="Klenk H.-P."/>
        </authorList>
    </citation>
    <scope>NUCLEOTIDE SEQUENCE [LARGE SCALE GENOMIC DNA]</scope>
    <source>
        <strain>DSM 12343 / LSv54</strain>
    </source>
</reference>
<accession>Q6AJQ9</accession>
<sequence length="151" mass="16838">MNTIKTRFGVIDYDPANLLLFPNGLVGLPHLRNFIVMPNKKEGPLFWIQSVDDPDMAFVLTDPNNFFPDYQIQPGKDEHTTLGISGSDEYFILSVVTVPADQKITLNLAAPIIFTPTNNRAVQVILGGDGYSTKTPLPTVKRHERRSVVNE</sequence>
<gene>
    <name evidence="1" type="primary">fliW2</name>
    <name type="ordered locus">DP2692</name>
</gene>
<dbReference type="EMBL" id="CR522870">
    <property type="protein sequence ID" value="CAG37421.1"/>
    <property type="molecule type" value="Genomic_DNA"/>
</dbReference>
<dbReference type="RefSeq" id="WP_011189933.1">
    <property type="nucleotide sequence ID" value="NC_006138.1"/>
</dbReference>
<dbReference type="SMR" id="Q6AJQ9"/>
<dbReference type="STRING" id="177439.DP2692"/>
<dbReference type="KEGG" id="dps:DP2692"/>
<dbReference type="eggNOG" id="COG1699">
    <property type="taxonomic scope" value="Bacteria"/>
</dbReference>
<dbReference type="HOGENOM" id="CLU_112356_0_2_7"/>
<dbReference type="OrthoDB" id="9801235at2"/>
<dbReference type="Proteomes" id="UP000000602">
    <property type="component" value="Chromosome"/>
</dbReference>
<dbReference type="GO" id="GO:0005737">
    <property type="term" value="C:cytoplasm"/>
    <property type="evidence" value="ECO:0007669"/>
    <property type="project" value="UniProtKB-SubCell"/>
</dbReference>
<dbReference type="GO" id="GO:0044780">
    <property type="term" value="P:bacterial-type flagellum assembly"/>
    <property type="evidence" value="ECO:0007669"/>
    <property type="project" value="UniProtKB-UniRule"/>
</dbReference>
<dbReference type="GO" id="GO:0006417">
    <property type="term" value="P:regulation of translation"/>
    <property type="evidence" value="ECO:0007669"/>
    <property type="project" value="UniProtKB-KW"/>
</dbReference>
<dbReference type="Gene3D" id="2.30.290.10">
    <property type="entry name" value="BH3618-like"/>
    <property type="match status" value="1"/>
</dbReference>
<dbReference type="HAMAP" id="MF_01185">
    <property type="entry name" value="FliW"/>
    <property type="match status" value="1"/>
</dbReference>
<dbReference type="InterPro" id="IPR003775">
    <property type="entry name" value="Flagellar_assembly_factor_FliW"/>
</dbReference>
<dbReference type="InterPro" id="IPR024046">
    <property type="entry name" value="Flagellar_assmbl_FliW_dom_sf"/>
</dbReference>
<dbReference type="NCBIfam" id="NF009799">
    <property type="entry name" value="PRK13285.2-2"/>
    <property type="match status" value="1"/>
</dbReference>
<dbReference type="PANTHER" id="PTHR39190">
    <property type="entry name" value="FLAGELLAR ASSEMBLY FACTOR FLIW"/>
    <property type="match status" value="1"/>
</dbReference>
<dbReference type="PANTHER" id="PTHR39190:SF1">
    <property type="entry name" value="FLAGELLAR ASSEMBLY FACTOR FLIW"/>
    <property type="match status" value="1"/>
</dbReference>
<dbReference type="Pfam" id="PF02623">
    <property type="entry name" value="FliW"/>
    <property type="match status" value="1"/>
</dbReference>
<dbReference type="SUPFAM" id="SSF141457">
    <property type="entry name" value="BH3618-like"/>
    <property type="match status" value="1"/>
</dbReference>
<name>FLIW2_DESPS</name>
<comment type="function">
    <text evidence="1">Acts as an anti-CsrA protein, binds CsrA and prevents it from repressing translation of its target genes, one of which is flagellin. Binds to flagellin and participates in the assembly of the flagellum.</text>
</comment>
<comment type="subunit">
    <text evidence="1">Interacts with translational regulator CsrA and flagellin(s).</text>
</comment>
<comment type="subcellular location">
    <subcellularLocation>
        <location evidence="1">Cytoplasm</location>
    </subcellularLocation>
</comment>
<comment type="similarity">
    <text evidence="1">Belongs to the FliW family.</text>
</comment>